<reference key="1">
    <citation type="journal article" date="2003" name="Nat. Biotechnol.">
        <title>The genome sequence of the entomopathogenic bacterium Photorhabdus luminescens.</title>
        <authorList>
            <person name="Duchaud E."/>
            <person name="Rusniok C."/>
            <person name="Frangeul L."/>
            <person name="Buchrieser C."/>
            <person name="Givaudan A."/>
            <person name="Taourit S."/>
            <person name="Bocs S."/>
            <person name="Boursaux-Eude C."/>
            <person name="Chandler M."/>
            <person name="Charles J.-F."/>
            <person name="Dassa E."/>
            <person name="Derose R."/>
            <person name="Derzelle S."/>
            <person name="Freyssinet G."/>
            <person name="Gaudriault S."/>
            <person name="Medigue C."/>
            <person name="Lanois A."/>
            <person name="Powell K."/>
            <person name="Siguier P."/>
            <person name="Vincent R."/>
            <person name="Wingate V."/>
            <person name="Zouine M."/>
            <person name="Glaser P."/>
            <person name="Boemare N."/>
            <person name="Danchin A."/>
            <person name="Kunst F."/>
        </authorList>
    </citation>
    <scope>NUCLEOTIDE SEQUENCE [LARGE SCALE GENOMIC DNA]</scope>
    <source>
        <strain>DSM 15139 / CIP 105565 / TT01</strain>
    </source>
</reference>
<feature type="chain" id="PRO_0000166608" description="Phosphoenolpyruvate carboxylase">
    <location>
        <begin position="1"/>
        <end position="878"/>
    </location>
</feature>
<feature type="active site" evidence="1">
    <location>
        <position position="137"/>
    </location>
</feature>
<feature type="active site" evidence="1">
    <location>
        <position position="545"/>
    </location>
</feature>
<organism>
    <name type="scientific">Photorhabdus laumondii subsp. laumondii (strain DSM 15139 / CIP 105565 / TT01)</name>
    <name type="common">Photorhabdus luminescens subsp. laumondii</name>
    <dbReference type="NCBI Taxonomy" id="243265"/>
    <lineage>
        <taxon>Bacteria</taxon>
        <taxon>Pseudomonadati</taxon>
        <taxon>Pseudomonadota</taxon>
        <taxon>Gammaproteobacteria</taxon>
        <taxon>Enterobacterales</taxon>
        <taxon>Morganellaceae</taxon>
        <taxon>Photorhabdus</taxon>
    </lineage>
</organism>
<proteinExistence type="inferred from homology"/>
<dbReference type="EC" id="4.1.1.31" evidence="1"/>
<dbReference type="EMBL" id="BX571874">
    <property type="protein sequence ID" value="CAE17118.1"/>
    <property type="molecule type" value="Genomic_DNA"/>
</dbReference>
<dbReference type="RefSeq" id="WP_011148814.1">
    <property type="nucleotide sequence ID" value="NC_005126.1"/>
</dbReference>
<dbReference type="SMR" id="Q7MAX5"/>
<dbReference type="STRING" id="243265.plu4746"/>
<dbReference type="GeneID" id="48850981"/>
<dbReference type="KEGG" id="plu:plu4746"/>
<dbReference type="eggNOG" id="COG2352">
    <property type="taxonomic scope" value="Bacteria"/>
</dbReference>
<dbReference type="HOGENOM" id="CLU_006557_2_0_6"/>
<dbReference type="OrthoDB" id="9768133at2"/>
<dbReference type="Proteomes" id="UP000002514">
    <property type="component" value="Chromosome"/>
</dbReference>
<dbReference type="GO" id="GO:0005829">
    <property type="term" value="C:cytosol"/>
    <property type="evidence" value="ECO:0007669"/>
    <property type="project" value="TreeGrafter"/>
</dbReference>
<dbReference type="GO" id="GO:0000287">
    <property type="term" value="F:magnesium ion binding"/>
    <property type="evidence" value="ECO:0007669"/>
    <property type="project" value="UniProtKB-UniRule"/>
</dbReference>
<dbReference type="GO" id="GO:0008964">
    <property type="term" value="F:phosphoenolpyruvate carboxylase activity"/>
    <property type="evidence" value="ECO:0007669"/>
    <property type="project" value="UniProtKB-UniRule"/>
</dbReference>
<dbReference type="GO" id="GO:0015977">
    <property type="term" value="P:carbon fixation"/>
    <property type="evidence" value="ECO:0007669"/>
    <property type="project" value="UniProtKB-UniRule"/>
</dbReference>
<dbReference type="GO" id="GO:0006107">
    <property type="term" value="P:oxaloacetate metabolic process"/>
    <property type="evidence" value="ECO:0007669"/>
    <property type="project" value="UniProtKB-UniRule"/>
</dbReference>
<dbReference type="GO" id="GO:0006099">
    <property type="term" value="P:tricarboxylic acid cycle"/>
    <property type="evidence" value="ECO:0007669"/>
    <property type="project" value="InterPro"/>
</dbReference>
<dbReference type="FunFam" id="1.20.1440.90:FF:000002">
    <property type="entry name" value="Phosphoenolpyruvate carboxylase"/>
    <property type="match status" value="1"/>
</dbReference>
<dbReference type="Gene3D" id="1.20.1440.90">
    <property type="entry name" value="Phosphoenolpyruvate/pyruvate domain"/>
    <property type="match status" value="1"/>
</dbReference>
<dbReference type="HAMAP" id="MF_00595">
    <property type="entry name" value="PEPcase_type1"/>
    <property type="match status" value="1"/>
</dbReference>
<dbReference type="InterPro" id="IPR021135">
    <property type="entry name" value="PEP_COase"/>
</dbReference>
<dbReference type="InterPro" id="IPR022805">
    <property type="entry name" value="PEP_COase_bac/pln-type"/>
</dbReference>
<dbReference type="InterPro" id="IPR018129">
    <property type="entry name" value="PEP_COase_Lys_AS"/>
</dbReference>
<dbReference type="InterPro" id="IPR033129">
    <property type="entry name" value="PEPCASE_His_AS"/>
</dbReference>
<dbReference type="InterPro" id="IPR015813">
    <property type="entry name" value="Pyrv/PenolPyrv_kinase-like_dom"/>
</dbReference>
<dbReference type="NCBIfam" id="NF000584">
    <property type="entry name" value="PRK00009.1"/>
    <property type="match status" value="1"/>
</dbReference>
<dbReference type="PANTHER" id="PTHR30523">
    <property type="entry name" value="PHOSPHOENOLPYRUVATE CARBOXYLASE"/>
    <property type="match status" value="1"/>
</dbReference>
<dbReference type="PANTHER" id="PTHR30523:SF6">
    <property type="entry name" value="PHOSPHOENOLPYRUVATE CARBOXYLASE"/>
    <property type="match status" value="1"/>
</dbReference>
<dbReference type="Pfam" id="PF00311">
    <property type="entry name" value="PEPcase"/>
    <property type="match status" value="1"/>
</dbReference>
<dbReference type="PRINTS" id="PR00150">
    <property type="entry name" value="PEPCARBXLASE"/>
</dbReference>
<dbReference type="SUPFAM" id="SSF51621">
    <property type="entry name" value="Phosphoenolpyruvate/pyruvate domain"/>
    <property type="match status" value="1"/>
</dbReference>
<dbReference type="PROSITE" id="PS00781">
    <property type="entry name" value="PEPCASE_1"/>
    <property type="match status" value="1"/>
</dbReference>
<dbReference type="PROSITE" id="PS00393">
    <property type="entry name" value="PEPCASE_2"/>
    <property type="match status" value="1"/>
</dbReference>
<sequence>MNQQYSAMRSNVSMLGKLLGDTIKEALGEDILDKVETIRKLSKSSRAGNEAHRQQLLSTLQNLSNNELLPVARAFNQFLNLTNVAEQYHSISPHGEAASNPVALAKLFTRLKEKNFNNGDLKKAVNELSIELVLTAHPTEIARRTLIHKLVAVNTCLSQLDHDDLADYERNNIMRRLRQLVAQSWHTDEIRKIRPTPIDEAKWGFAMVENSLWEGVPAFLREFNEQLEESIDYSLPVEAVPVRFTSWMGGDRDGNPNVTAEVTRHVLLLSRWKAADLFLKDIQVLVSELSMSECTPEVRKLAGGDEILEPYREIAKKLRTQLSNTLTYLEKQLKGEQVLPPTDLLVDNEQLWQPLYACYQSLKTCGMEIIANGQLLDILRRIRCFGLSLVRIDVRQESTRHTTAISELTQYLELGDYASWSEEEKQAFLLYELHSKRPLIPHNWQPSAETQEVFATCKVIAESPQDAIAAYVISMAKAPSDVLAVHLLLKEAGCPFTLPVAPLFETLDDLNNAENIIQQLMNIQWYRELIHDKQMVMIGYSDSAKDAGVMAAAWAQYRAQDALINVCEKEGITLTLFHGRGGTIGRGGAPAHAALLSQPPGSLKGGLRVTEQGEMIRFKFGLPQVTISSLALYASAILEANLLPPPEPKPEWHQVMDTLSDVSCKMYRDYVREQPDFVPYFRAATPEQELAKLPLGSRPAKRHPAGGVESLRAIPWIFAWTQNRLMLPAWLGAGAALQQVVNDGKQDVLAEMCRDWPFFTTRIGMLEMVFAKADLWLAEYYDHRLVDKNLWPLGQKLRKQLSADIKTVLAISKDEHLMADLPWIAESIALRNVYTDPLNVLQVELLLRSRQQQYSDPQVEQALMVTIAGIAAGMRNTG</sequence>
<accession>Q7MAX5</accession>
<gene>
    <name evidence="1" type="primary">ppc</name>
    <name type="ordered locus">plu4746</name>
</gene>
<keyword id="KW-0120">Carbon dioxide fixation</keyword>
<keyword id="KW-0456">Lyase</keyword>
<keyword id="KW-0460">Magnesium</keyword>
<keyword id="KW-1185">Reference proteome</keyword>
<evidence type="ECO:0000255" key="1">
    <source>
        <dbReference type="HAMAP-Rule" id="MF_00595"/>
    </source>
</evidence>
<name>CAPP_PHOLL</name>
<protein>
    <recommendedName>
        <fullName evidence="1">Phosphoenolpyruvate carboxylase</fullName>
        <shortName evidence="1">PEPC</shortName>
        <shortName evidence="1">PEPCase</shortName>
        <ecNumber evidence="1">4.1.1.31</ecNumber>
    </recommendedName>
</protein>
<comment type="function">
    <text evidence="1">Forms oxaloacetate, a four-carbon dicarboxylic acid source for the tricarboxylic acid cycle.</text>
</comment>
<comment type="catalytic activity">
    <reaction evidence="1">
        <text>oxaloacetate + phosphate = phosphoenolpyruvate + hydrogencarbonate</text>
        <dbReference type="Rhea" id="RHEA:28370"/>
        <dbReference type="ChEBI" id="CHEBI:16452"/>
        <dbReference type="ChEBI" id="CHEBI:17544"/>
        <dbReference type="ChEBI" id="CHEBI:43474"/>
        <dbReference type="ChEBI" id="CHEBI:58702"/>
        <dbReference type="EC" id="4.1.1.31"/>
    </reaction>
</comment>
<comment type="cofactor">
    <cofactor evidence="1">
        <name>Mg(2+)</name>
        <dbReference type="ChEBI" id="CHEBI:18420"/>
    </cofactor>
</comment>
<comment type="similarity">
    <text evidence="1">Belongs to the PEPCase type 1 family.</text>
</comment>